<organism>
    <name type="scientific">Salmonella gallinarum (strain 287/91 / NCTC 13346)</name>
    <dbReference type="NCBI Taxonomy" id="550538"/>
    <lineage>
        <taxon>Bacteria</taxon>
        <taxon>Pseudomonadati</taxon>
        <taxon>Pseudomonadota</taxon>
        <taxon>Gammaproteobacteria</taxon>
        <taxon>Enterobacterales</taxon>
        <taxon>Enterobacteriaceae</taxon>
        <taxon>Salmonella</taxon>
    </lineage>
</organism>
<comment type="function">
    <text evidence="1">During stationary phase, binds the chromosome non-specifically, forming a highly ordered and stable dps-DNA co-crystal within which chromosomal DNA is condensed and protected from diverse damages. It protects DNA from oxidative damage by sequestering intracellular Fe(2+) ion and storing it in the form of Fe(3+) oxyhydroxide mineral, which can be released after reduction. One hydrogen peroxide oxidizes two Fe(2+) ions, which prevents hydroxyl radical production by the Fenton reaction.</text>
</comment>
<comment type="catalytic activity">
    <reaction evidence="1">
        <text>2 Fe(2+) + H2O2 + 2 H(+) = 2 Fe(3+) + 2 H2O</text>
        <dbReference type="Rhea" id="RHEA:48712"/>
        <dbReference type="ChEBI" id="CHEBI:15377"/>
        <dbReference type="ChEBI" id="CHEBI:15378"/>
        <dbReference type="ChEBI" id="CHEBI:16240"/>
        <dbReference type="ChEBI" id="CHEBI:29033"/>
        <dbReference type="ChEBI" id="CHEBI:29034"/>
    </reaction>
</comment>
<comment type="subunit">
    <text evidence="1">Homododecamer. The 12 subunits form a hollow sphere into which the mineral iron core of up to 500 Fe(3+) can be deposited.</text>
</comment>
<comment type="subcellular location">
    <subcellularLocation>
        <location evidence="1">Cytoplasm</location>
    </subcellularLocation>
</comment>
<comment type="similarity">
    <text evidence="1">Belongs to the Dps family.</text>
</comment>
<protein>
    <recommendedName>
        <fullName evidence="1">DNA protection during starvation protein</fullName>
        <ecNumber evidence="1">1.16.-.-</ecNumber>
    </recommendedName>
</protein>
<dbReference type="EC" id="1.16.-.-" evidence="1"/>
<dbReference type="EMBL" id="AM933173">
    <property type="protein sequence ID" value="CAR36704.1"/>
    <property type="molecule type" value="Genomic_DNA"/>
</dbReference>
<dbReference type="RefSeq" id="WP_000100805.1">
    <property type="nucleotide sequence ID" value="NC_011274.1"/>
</dbReference>
<dbReference type="SMR" id="B5R797"/>
<dbReference type="KEGG" id="seg:SG0810"/>
<dbReference type="HOGENOM" id="CLU_098183_1_2_6"/>
<dbReference type="Proteomes" id="UP000008321">
    <property type="component" value="Chromosome"/>
</dbReference>
<dbReference type="GO" id="GO:0005737">
    <property type="term" value="C:cytoplasm"/>
    <property type="evidence" value="ECO:0007669"/>
    <property type="project" value="UniProtKB-SubCell"/>
</dbReference>
<dbReference type="GO" id="GO:0003677">
    <property type="term" value="F:DNA binding"/>
    <property type="evidence" value="ECO:0007669"/>
    <property type="project" value="UniProtKB-UniRule"/>
</dbReference>
<dbReference type="GO" id="GO:0008199">
    <property type="term" value="F:ferric iron binding"/>
    <property type="evidence" value="ECO:0007669"/>
    <property type="project" value="UniProtKB-UniRule"/>
</dbReference>
<dbReference type="GO" id="GO:0016722">
    <property type="term" value="F:oxidoreductase activity, acting on metal ions"/>
    <property type="evidence" value="ECO:0007669"/>
    <property type="project" value="InterPro"/>
</dbReference>
<dbReference type="GO" id="GO:0030261">
    <property type="term" value="P:chromosome condensation"/>
    <property type="evidence" value="ECO:0007669"/>
    <property type="project" value="UniProtKB-KW"/>
</dbReference>
<dbReference type="GO" id="GO:0006879">
    <property type="term" value="P:intracellular iron ion homeostasis"/>
    <property type="evidence" value="ECO:0007669"/>
    <property type="project" value="UniProtKB-KW"/>
</dbReference>
<dbReference type="CDD" id="cd01043">
    <property type="entry name" value="DPS"/>
    <property type="match status" value="1"/>
</dbReference>
<dbReference type="FunFam" id="1.20.1260.10:FF:000003">
    <property type="entry name" value="DNA protection during starvation protein"/>
    <property type="match status" value="1"/>
</dbReference>
<dbReference type="Gene3D" id="1.20.1260.10">
    <property type="match status" value="1"/>
</dbReference>
<dbReference type="HAMAP" id="MF_01441">
    <property type="entry name" value="Dps"/>
    <property type="match status" value="1"/>
</dbReference>
<dbReference type="InterPro" id="IPR002177">
    <property type="entry name" value="DPS_DNA-bd"/>
</dbReference>
<dbReference type="InterPro" id="IPR023188">
    <property type="entry name" value="DPS_DNA-bd_CS"/>
</dbReference>
<dbReference type="InterPro" id="IPR023067">
    <property type="entry name" value="Dps_gammaproteobac"/>
</dbReference>
<dbReference type="InterPro" id="IPR012347">
    <property type="entry name" value="Ferritin-like"/>
</dbReference>
<dbReference type="InterPro" id="IPR009078">
    <property type="entry name" value="Ferritin-like_SF"/>
</dbReference>
<dbReference type="InterPro" id="IPR008331">
    <property type="entry name" value="Ferritin_DPS_dom"/>
</dbReference>
<dbReference type="NCBIfam" id="NF006975">
    <property type="entry name" value="PRK09448.1"/>
    <property type="match status" value="1"/>
</dbReference>
<dbReference type="PANTHER" id="PTHR42932:SF3">
    <property type="entry name" value="DNA PROTECTION DURING STARVATION PROTEIN"/>
    <property type="match status" value="1"/>
</dbReference>
<dbReference type="PANTHER" id="PTHR42932">
    <property type="entry name" value="GENERAL STRESS PROTEIN 20U"/>
    <property type="match status" value="1"/>
</dbReference>
<dbReference type="Pfam" id="PF00210">
    <property type="entry name" value="Ferritin"/>
    <property type="match status" value="1"/>
</dbReference>
<dbReference type="PIRSF" id="PIRSF005900">
    <property type="entry name" value="Dps"/>
    <property type="match status" value="1"/>
</dbReference>
<dbReference type="PRINTS" id="PR01346">
    <property type="entry name" value="HELNAPAPROT"/>
</dbReference>
<dbReference type="SUPFAM" id="SSF47240">
    <property type="entry name" value="Ferritin-like"/>
    <property type="match status" value="1"/>
</dbReference>
<dbReference type="PROSITE" id="PS00818">
    <property type="entry name" value="DPS_1"/>
    <property type="match status" value="1"/>
</dbReference>
<dbReference type="PROSITE" id="PS00819">
    <property type="entry name" value="DPS_2"/>
    <property type="match status" value="1"/>
</dbReference>
<gene>
    <name evidence="1" type="primary">dps</name>
    <name type="ordered locus">SG0810</name>
</gene>
<proteinExistence type="inferred from homology"/>
<name>DPS_SALG2</name>
<keyword id="KW-0963">Cytoplasm</keyword>
<keyword id="KW-0226">DNA condensation</keyword>
<keyword id="KW-0238">DNA-binding</keyword>
<keyword id="KW-0408">Iron</keyword>
<keyword id="KW-0409">Iron storage</keyword>
<keyword id="KW-0479">Metal-binding</keyword>
<keyword id="KW-0560">Oxidoreductase</keyword>
<evidence type="ECO:0000255" key="1">
    <source>
        <dbReference type="HAMAP-Rule" id="MF_01441"/>
    </source>
</evidence>
<sequence length="167" mass="18717">MSTAKLVKTKASNLLYTRNDVSESDKKATVELLNRQVIQFIDLSLITKQAHWNMRGANFIAVHEMLDGFRTALTDHLDTMAERAVQLGGVALGTTQVINSKTPLKSYPLDIHNVQDHLKELADRYAVVANDVRKAIGEAKDEDTADIFTAASRDLDKFLWFIESNIE</sequence>
<accession>B5R797</accession>
<reference key="1">
    <citation type="journal article" date="2008" name="Genome Res.">
        <title>Comparative genome analysis of Salmonella enteritidis PT4 and Salmonella gallinarum 287/91 provides insights into evolutionary and host adaptation pathways.</title>
        <authorList>
            <person name="Thomson N.R."/>
            <person name="Clayton D.J."/>
            <person name="Windhorst D."/>
            <person name="Vernikos G."/>
            <person name="Davidson S."/>
            <person name="Churcher C."/>
            <person name="Quail M.A."/>
            <person name="Stevens M."/>
            <person name="Jones M.A."/>
            <person name="Watson M."/>
            <person name="Barron A."/>
            <person name="Layton A."/>
            <person name="Pickard D."/>
            <person name="Kingsley R.A."/>
            <person name="Bignell A."/>
            <person name="Clark L."/>
            <person name="Harris B."/>
            <person name="Ormond D."/>
            <person name="Abdellah Z."/>
            <person name="Brooks K."/>
            <person name="Cherevach I."/>
            <person name="Chillingworth T."/>
            <person name="Woodward J."/>
            <person name="Norberczak H."/>
            <person name="Lord A."/>
            <person name="Arrowsmith C."/>
            <person name="Jagels K."/>
            <person name="Moule S."/>
            <person name="Mungall K."/>
            <person name="Saunders M."/>
            <person name="Whitehead S."/>
            <person name="Chabalgoity J.A."/>
            <person name="Maskell D."/>
            <person name="Humphreys T."/>
            <person name="Roberts M."/>
            <person name="Barrow P.A."/>
            <person name="Dougan G."/>
            <person name="Parkhill J."/>
        </authorList>
    </citation>
    <scope>NUCLEOTIDE SEQUENCE [LARGE SCALE GENOMIC DNA]</scope>
    <source>
        <strain>287/91 / NCTC 13346</strain>
    </source>
</reference>
<feature type="chain" id="PRO_1000145912" description="DNA protection during starvation protein">
    <location>
        <begin position="1"/>
        <end position="167"/>
    </location>
</feature>
<feature type="binding site" evidence="1">
    <location>
        <position position="51"/>
    </location>
    <ligand>
        <name>Fe cation</name>
        <dbReference type="ChEBI" id="CHEBI:24875"/>
    </ligand>
</feature>
<feature type="binding site" evidence="1">
    <location>
        <position position="78"/>
    </location>
    <ligand>
        <name>Fe cation</name>
        <dbReference type="ChEBI" id="CHEBI:24875"/>
    </ligand>
</feature>
<feature type="binding site" evidence="1">
    <location>
        <position position="82"/>
    </location>
    <ligand>
        <name>Fe cation</name>
        <dbReference type="ChEBI" id="CHEBI:24875"/>
    </ligand>
</feature>